<organism>
    <name type="scientific">Shewanella baltica (strain OS155 / ATCC BAA-1091)</name>
    <dbReference type="NCBI Taxonomy" id="325240"/>
    <lineage>
        <taxon>Bacteria</taxon>
        <taxon>Pseudomonadati</taxon>
        <taxon>Pseudomonadota</taxon>
        <taxon>Gammaproteobacteria</taxon>
        <taxon>Alteromonadales</taxon>
        <taxon>Shewanellaceae</taxon>
        <taxon>Shewanella</taxon>
    </lineage>
</organism>
<reference key="1">
    <citation type="submission" date="2007-02" db="EMBL/GenBank/DDBJ databases">
        <title>Complete sequence of chromosome of Shewanella baltica OS155.</title>
        <authorList>
            <consortium name="US DOE Joint Genome Institute"/>
            <person name="Copeland A."/>
            <person name="Lucas S."/>
            <person name="Lapidus A."/>
            <person name="Barry K."/>
            <person name="Detter J.C."/>
            <person name="Glavina del Rio T."/>
            <person name="Hammon N."/>
            <person name="Israni S."/>
            <person name="Dalin E."/>
            <person name="Tice H."/>
            <person name="Pitluck S."/>
            <person name="Sims D.R."/>
            <person name="Brettin T."/>
            <person name="Bruce D."/>
            <person name="Han C."/>
            <person name="Tapia R."/>
            <person name="Brainard J."/>
            <person name="Schmutz J."/>
            <person name="Larimer F."/>
            <person name="Land M."/>
            <person name="Hauser L."/>
            <person name="Kyrpides N."/>
            <person name="Mikhailova N."/>
            <person name="Brettar I."/>
            <person name="Klappenbach J."/>
            <person name="Konstantinidis K."/>
            <person name="Rodrigues J."/>
            <person name="Tiedje J."/>
            <person name="Richardson P."/>
        </authorList>
    </citation>
    <scope>NUCLEOTIDE SEQUENCE [LARGE SCALE GENOMIC DNA]</scope>
    <source>
        <strain>OS155 / ATCC BAA-1091</strain>
    </source>
</reference>
<name>RL18_SHEB5</name>
<gene>
    <name evidence="1" type="primary">rplR</name>
    <name type="ordered locus">Sbal_4154</name>
</gene>
<feature type="chain" id="PRO_1000053104" description="Large ribosomal subunit protein uL18">
    <location>
        <begin position="1"/>
        <end position="116"/>
    </location>
</feature>
<protein>
    <recommendedName>
        <fullName evidence="1">Large ribosomal subunit protein uL18</fullName>
    </recommendedName>
    <alternativeName>
        <fullName evidence="2">50S ribosomal protein L18</fullName>
    </alternativeName>
</protein>
<sequence length="116" mass="12683">MDKKTSRLRRATRARKKIQELGVNRLVVHRTPRHIYAQVINPEAQVLAAASTVEKAVKELLKSTGNVDAAKAVGKFVAERAIEKGVTSVAFDRSGFKYHGRVAALADAAREAGLKF</sequence>
<evidence type="ECO:0000255" key="1">
    <source>
        <dbReference type="HAMAP-Rule" id="MF_01337"/>
    </source>
</evidence>
<evidence type="ECO:0000305" key="2"/>
<comment type="function">
    <text evidence="1">This is one of the proteins that bind and probably mediate the attachment of the 5S RNA into the large ribosomal subunit, where it forms part of the central protuberance.</text>
</comment>
<comment type="subunit">
    <text evidence="1">Part of the 50S ribosomal subunit; part of the 5S rRNA/L5/L18/L25 subcomplex. Contacts the 5S and 23S rRNAs.</text>
</comment>
<comment type="similarity">
    <text evidence="1">Belongs to the universal ribosomal protein uL18 family.</text>
</comment>
<proteinExistence type="inferred from homology"/>
<keyword id="KW-1185">Reference proteome</keyword>
<keyword id="KW-0687">Ribonucleoprotein</keyword>
<keyword id="KW-0689">Ribosomal protein</keyword>
<keyword id="KW-0694">RNA-binding</keyword>
<keyword id="KW-0699">rRNA-binding</keyword>
<accession>A3DA56</accession>
<dbReference type="EMBL" id="CP000563">
    <property type="protein sequence ID" value="ABN63619.1"/>
    <property type="molecule type" value="Genomic_DNA"/>
</dbReference>
<dbReference type="RefSeq" id="WP_006083584.1">
    <property type="nucleotide sequence ID" value="NC_009052.1"/>
</dbReference>
<dbReference type="SMR" id="A3DA56"/>
<dbReference type="STRING" id="325240.Sbal_4154"/>
<dbReference type="GeneID" id="11770572"/>
<dbReference type="KEGG" id="sbl:Sbal_4154"/>
<dbReference type="HOGENOM" id="CLU_098841_0_1_6"/>
<dbReference type="OrthoDB" id="9810939at2"/>
<dbReference type="Proteomes" id="UP000001557">
    <property type="component" value="Chromosome"/>
</dbReference>
<dbReference type="GO" id="GO:0022625">
    <property type="term" value="C:cytosolic large ribosomal subunit"/>
    <property type="evidence" value="ECO:0007669"/>
    <property type="project" value="TreeGrafter"/>
</dbReference>
<dbReference type="GO" id="GO:0008097">
    <property type="term" value="F:5S rRNA binding"/>
    <property type="evidence" value="ECO:0007669"/>
    <property type="project" value="TreeGrafter"/>
</dbReference>
<dbReference type="GO" id="GO:0003735">
    <property type="term" value="F:structural constituent of ribosome"/>
    <property type="evidence" value="ECO:0007669"/>
    <property type="project" value="InterPro"/>
</dbReference>
<dbReference type="GO" id="GO:0006412">
    <property type="term" value="P:translation"/>
    <property type="evidence" value="ECO:0007669"/>
    <property type="project" value="UniProtKB-UniRule"/>
</dbReference>
<dbReference type="CDD" id="cd00432">
    <property type="entry name" value="Ribosomal_L18_L5e"/>
    <property type="match status" value="1"/>
</dbReference>
<dbReference type="FunFam" id="3.30.420.100:FF:000001">
    <property type="entry name" value="50S ribosomal protein L18"/>
    <property type="match status" value="1"/>
</dbReference>
<dbReference type="Gene3D" id="3.30.420.100">
    <property type="match status" value="1"/>
</dbReference>
<dbReference type="HAMAP" id="MF_01337_B">
    <property type="entry name" value="Ribosomal_uL18_B"/>
    <property type="match status" value="1"/>
</dbReference>
<dbReference type="InterPro" id="IPR004389">
    <property type="entry name" value="Ribosomal_uL18_bac-type"/>
</dbReference>
<dbReference type="InterPro" id="IPR005484">
    <property type="entry name" value="Ribosomal_uL18_bac/euk"/>
</dbReference>
<dbReference type="NCBIfam" id="TIGR00060">
    <property type="entry name" value="L18_bact"/>
    <property type="match status" value="1"/>
</dbReference>
<dbReference type="PANTHER" id="PTHR12899">
    <property type="entry name" value="39S RIBOSOMAL PROTEIN L18, MITOCHONDRIAL"/>
    <property type="match status" value="1"/>
</dbReference>
<dbReference type="PANTHER" id="PTHR12899:SF3">
    <property type="entry name" value="LARGE RIBOSOMAL SUBUNIT PROTEIN UL18M"/>
    <property type="match status" value="1"/>
</dbReference>
<dbReference type="Pfam" id="PF00861">
    <property type="entry name" value="Ribosomal_L18p"/>
    <property type="match status" value="1"/>
</dbReference>
<dbReference type="SUPFAM" id="SSF53137">
    <property type="entry name" value="Translational machinery components"/>
    <property type="match status" value="1"/>
</dbReference>